<accession>P36472</accession>
<organism>
    <name type="scientific">Stipellula capensis</name>
    <name type="common">Cape rice grass</name>
    <name type="synonym">Stipa capensis</name>
    <dbReference type="NCBI Taxonomy" id="29707"/>
    <lineage>
        <taxon>Eukaryota</taxon>
        <taxon>Viridiplantae</taxon>
        <taxon>Streptophyta</taxon>
        <taxon>Embryophyta</taxon>
        <taxon>Tracheophyta</taxon>
        <taxon>Spermatophyta</taxon>
        <taxon>Magnoliopsida</taxon>
        <taxon>Liliopsida</taxon>
        <taxon>Poales</taxon>
        <taxon>Poaceae</taxon>
        <taxon>BOP clade</taxon>
        <taxon>Pooideae</taxon>
        <taxon>Stipodae</taxon>
        <taxon>Stipeae</taxon>
        <taxon>Stipellula</taxon>
    </lineage>
</organism>
<dbReference type="EMBL" id="Z29251">
    <property type="protein sequence ID" value="CAA82450.1"/>
    <property type="molecule type" value="Genomic_DNA"/>
</dbReference>
<dbReference type="PIR" id="S41280">
    <property type="entry name" value="S41280"/>
</dbReference>
<dbReference type="SMR" id="P36472"/>
<dbReference type="GO" id="GO:0009507">
    <property type="term" value="C:chloroplast"/>
    <property type="evidence" value="ECO:0007669"/>
    <property type="project" value="UniProtKB-SubCell"/>
</dbReference>
<dbReference type="GO" id="GO:0015935">
    <property type="term" value="C:small ribosomal subunit"/>
    <property type="evidence" value="ECO:0007669"/>
    <property type="project" value="InterPro"/>
</dbReference>
<dbReference type="GO" id="GO:0019843">
    <property type="term" value="F:rRNA binding"/>
    <property type="evidence" value="ECO:0007669"/>
    <property type="project" value="UniProtKB-KW"/>
</dbReference>
<dbReference type="GO" id="GO:0003735">
    <property type="term" value="F:structural constituent of ribosome"/>
    <property type="evidence" value="ECO:0007669"/>
    <property type="project" value="InterPro"/>
</dbReference>
<dbReference type="GO" id="GO:0042274">
    <property type="term" value="P:ribosomal small subunit biogenesis"/>
    <property type="evidence" value="ECO:0007669"/>
    <property type="project" value="TreeGrafter"/>
</dbReference>
<dbReference type="GO" id="GO:0006412">
    <property type="term" value="P:translation"/>
    <property type="evidence" value="ECO:0007669"/>
    <property type="project" value="InterPro"/>
</dbReference>
<dbReference type="CDD" id="cd00165">
    <property type="entry name" value="S4"/>
    <property type="match status" value="1"/>
</dbReference>
<dbReference type="FunFam" id="1.10.1050.10:FF:000002">
    <property type="entry name" value="30S ribosomal protein S4, chloroplastic"/>
    <property type="match status" value="1"/>
</dbReference>
<dbReference type="FunFam" id="3.10.290.10:FF:000081">
    <property type="entry name" value="30S ribosomal protein S4, chloroplastic"/>
    <property type="match status" value="1"/>
</dbReference>
<dbReference type="Gene3D" id="1.10.1050.10">
    <property type="entry name" value="Ribosomal Protein S4 Delta 41, Chain A, domain 1"/>
    <property type="match status" value="1"/>
</dbReference>
<dbReference type="Gene3D" id="3.10.290.10">
    <property type="entry name" value="RNA-binding S4 domain"/>
    <property type="match status" value="1"/>
</dbReference>
<dbReference type="HAMAP" id="MF_01306_B">
    <property type="entry name" value="Ribosomal_uS4_B"/>
    <property type="match status" value="1"/>
</dbReference>
<dbReference type="InterPro" id="IPR022801">
    <property type="entry name" value="Ribosomal_uS4"/>
</dbReference>
<dbReference type="InterPro" id="IPR005709">
    <property type="entry name" value="Ribosomal_uS4_bac-type"/>
</dbReference>
<dbReference type="InterPro" id="IPR018079">
    <property type="entry name" value="Ribosomal_uS4_CS"/>
</dbReference>
<dbReference type="InterPro" id="IPR001912">
    <property type="entry name" value="Ribosomal_uS4_N"/>
</dbReference>
<dbReference type="InterPro" id="IPR002942">
    <property type="entry name" value="S4_RNA-bd"/>
</dbReference>
<dbReference type="InterPro" id="IPR036986">
    <property type="entry name" value="S4_RNA-bd_sf"/>
</dbReference>
<dbReference type="NCBIfam" id="NF003717">
    <property type="entry name" value="PRK05327.1"/>
    <property type="match status" value="1"/>
</dbReference>
<dbReference type="NCBIfam" id="TIGR01017">
    <property type="entry name" value="rpsD_bact"/>
    <property type="match status" value="1"/>
</dbReference>
<dbReference type="PANTHER" id="PTHR11831">
    <property type="entry name" value="30S 40S RIBOSOMAL PROTEIN"/>
    <property type="match status" value="1"/>
</dbReference>
<dbReference type="PANTHER" id="PTHR11831:SF4">
    <property type="entry name" value="SMALL RIBOSOMAL SUBUNIT PROTEIN US4M"/>
    <property type="match status" value="1"/>
</dbReference>
<dbReference type="Pfam" id="PF00163">
    <property type="entry name" value="Ribosomal_S4"/>
    <property type="match status" value="1"/>
</dbReference>
<dbReference type="Pfam" id="PF01479">
    <property type="entry name" value="S4"/>
    <property type="match status" value="1"/>
</dbReference>
<dbReference type="SMART" id="SM01390">
    <property type="entry name" value="Ribosomal_S4"/>
    <property type="match status" value="1"/>
</dbReference>
<dbReference type="SMART" id="SM00363">
    <property type="entry name" value="S4"/>
    <property type="match status" value="1"/>
</dbReference>
<dbReference type="SUPFAM" id="SSF55174">
    <property type="entry name" value="Alpha-L RNA-binding motif"/>
    <property type="match status" value="1"/>
</dbReference>
<dbReference type="PROSITE" id="PS00632">
    <property type="entry name" value="RIBOSOMAL_S4"/>
    <property type="match status" value="1"/>
</dbReference>
<dbReference type="PROSITE" id="PS50889">
    <property type="entry name" value="S4"/>
    <property type="match status" value="1"/>
</dbReference>
<evidence type="ECO:0000250" key="1"/>
<evidence type="ECO:0000305" key="2"/>
<reference key="1">
    <citation type="journal article" date="1994" name="Plant Syst. Evol.">
        <title>The chloroplast gene rps4 as a tool for the study of Poaceae phylogeny.</title>
        <authorList>
            <person name="Nadot S."/>
            <person name="Bajon R."/>
            <person name="Lejeune B."/>
        </authorList>
        <dbReference type="AGRICOLA" id="IND20417698"/>
    </citation>
    <scope>NUCLEOTIDE SEQUENCE [GENOMIC DNA]</scope>
</reference>
<protein>
    <recommendedName>
        <fullName evidence="2">Small ribosomal subunit protein uS4c</fullName>
    </recommendedName>
    <alternativeName>
        <fullName>30S ribosomal protein S4, chloroplastic</fullName>
    </alternativeName>
</protein>
<comment type="function">
    <text evidence="1">One of the primary rRNA binding proteins, it binds directly to 16S rRNA where it nucleates assembly of the body of the 30S subunit.</text>
</comment>
<comment type="function">
    <text evidence="1">With S5 and S12 plays an important role in translational accuracy.</text>
</comment>
<comment type="subunit">
    <text evidence="1">Part of the 30S ribosomal subunit. Contacts protein S5. The interaction surface between S4 and S5 is involved in control of translational fidelity (By similarity).</text>
</comment>
<comment type="subcellular location">
    <subcellularLocation>
        <location>Plastid</location>
        <location>Chloroplast</location>
    </subcellularLocation>
</comment>
<comment type="similarity">
    <text evidence="2">Belongs to the universal ribosomal protein uS4 family.</text>
</comment>
<feature type="chain" id="PRO_0000132671" description="Small ribosomal subunit protein uS4c">
    <location>
        <begin position="1"/>
        <end position="196" status="greater than"/>
    </location>
</feature>
<feature type="domain" description="S4 RNA-binding">
    <location>
        <begin position="89"/>
        <end position="169"/>
    </location>
</feature>
<feature type="non-terminal residue">
    <location>
        <position position="196"/>
    </location>
</feature>
<geneLocation type="chloroplast"/>
<proteinExistence type="inferred from homology"/>
<sequence>MSRYRGPRLKKIRRLGALPGLTRKTPKSGSNLKKKFNSGKKEQYRIRLQEKQKLRFHYGLTERQLLRYVHIAGKAKRSTGQVLLQLLEMRLDNIIFRLGMASTIPGARQLVNHRHILVNGRIVNIPSFRCKPRDIITTKDNQRSKGLVQNSIASSDPGKLPKHLTIDTVEYKGLVNKILDRKWVGLKINELLVVEY</sequence>
<name>RR4_STICA</name>
<keyword id="KW-0150">Chloroplast</keyword>
<keyword id="KW-0934">Plastid</keyword>
<keyword id="KW-0687">Ribonucleoprotein</keyword>
<keyword id="KW-0689">Ribosomal protein</keyword>
<keyword id="KW-0694">RNA-binding</keyword>
<keyword id="KW-0699">rRNA-binding</keyword>
<gene>
    <name type="primary">rps4</name>
</gene>